<evidence type="ECO:0000255" key="1">
    <source>
        <dbReference type="HAMAP-Rule" id="MF_00377"/>
    </source>
</evidence>
<protein>
    <recommendedName>
        <fullName evidence="1">Chromosomal replication initiator protein DnaA</fullName>
    </recommendedName>
</protein>
<keyword id="KW-0067">ATP-binding</keyword>
<keyword id="KW-0963">Cytoplasm</keyword>
<keyword id="KW-0235">DNA replication</keyword>
<keyword id="KW-0238">DNA-binding</keyword>
<keyword id="KW-0446">Lipid-binding</keyword>
<keyword id="KW-0547">Nucleotide-binding</keyword>
<gene>
    <name evidence="1" type="primary">dnaA</name>
    <name type="ordered locus">SNSL254_A4123</name>
</gene>
<name>DNAA_SALNS</name>
<reference key="1">
    <citation type="journal article" date="2011" name="J. Bacteriol.">
        <title>Comparative genomics of 28 Salmonella enterica isolates: evidence for CRISPR-mediated adaptive sublineage evolution.</title>
        <authorList>
            <person name="Fricke W.F."/>
            <person name="Mammel M.K."/>
            <person name="McDermott P.F."/>
            <person name="Tartera C."/>
            <person name="White D.G."/>
            <person name="Leclerc J.E."/>
            <person name="Ravel J."/>
            <person name="Cebula T.A."/>
        </authorList>
    </citation>
    <scope>NUCLEOTIDE SEQUENCE [LARGE SCALE GENOMIC DNA]</scope>
    <source>
        <strain>SL254</strain>
    </source>
</reference>
<accession>B4SYA8</accession>
<organism>
    <name type="scientific">Salmonella newport (strain SL254)</name>
    <dbReference type="NCBI Taxonomy" id="423368"/>
    <lineage>
        <taxon>Bacteria</taxon>
        <taxon>Pseudomonadati</taxon>
        <taxon>Pseudomonadota</taxon>
        <taxon>Gammaproteobacteria</taxon>
        <taxon>Enterobacterales</taxon>
        <taxon>Enterobacteriaceae</taxon>
        <taxon>Salmonella</taxon>
    </lineage>
</organism>
<comment type="function">
    <text evidence="1">Plays an essential role in the initiation and regulation of chromosomal replication. ATP-DnaA binds to the origin of replication (oriC) to initiate formation of the DNA replication initiation complex once per cell cycle. Binds the DnaA box (a 9 base pair repeat at the origin) and separates the double-stranded (ds)DNA. Forms a right-handed helical filament on oriC DNA; dsDNA binds to the exterior of the filament while single-stranded (ss)DNA is stabiized in the filament's interior. The ATP-DnaA-oriC complex binds and stabilizes one strand of the AT-rich DNA unwinding element (DUE), permitting loading of DNA polymerase. After initiation quickly degrades to an ADP-DnaA complex that is not apt for DNA replication. Binds acidic phospholipids.</text>
</comment>
<comment type="subunit">
    <text evidence="1">Oligomerizes as a right-handed, spiral filament on DNA at oriC.</text>
</comment>
<comment type="subcellular location">
    <subcellularLocation>
        <location evidence="1">Cytoplasm</location>
    </subcellularLocation>
</comment>
<comment type="domain">
    <text evidence="1">Domain I is involved in oligomerization and binding regulators, domain II is flexibile and of varying length in different bacteria, domain III forms the AAA+ region, while domain IV binds dsDNA.</text>
</comment>
<comment type="similarity">
    <text evidence="1">Belongs to the DnaA family.</text>
</comment>
<sequence>MSLSLWQQCLARLQDELPATEFSMWIRPLQAELSDNTLALYAPNRFVLDWVRDKYLNNINGLLNTFCGADAPQLRFEVGTKPVTQTLKTPVHNVVAPAQTTTAQPQRVAPAARSGWDNVPAPAEPTYRSNVNVKHTFDNFVEGKSNQLARAAARQVADNPGGAYNPLFLYGGTGLGKTHLLHAVGNGIMARKPNAKVVYMHSERFVQDMVKALQNNAIEEFKRYYRSVDALLIDDIQFFANKERSQEEFFHTFNALLEGNQQIILTSDRYPKEINGVEDRLKSRFGWGLTVAIEPPELETRVAILMKKADENDIRLPGEVAFFIAKRLRSNVRELEGALNRVIANANFTGRAITIDFVREALRDLLALQEKLVTIDNIQKTVAEYYKIKIADLLSKRRSRSVARPRQMAMALAKELTNHSLPEIGDAFGGRDHTTVLHACRKIEQLREESHDIKEDFSNLIRTLSS</sequence>
<feature type="chain" id="PRO_1000122013" description="Chromosomal replication initiator protein DnaA">
    <location>
        <begin position="1"/>
        <end position="466"/>
    </location>
</feature>
<feature type="region of interest" description="Domain I, interacts with DnaA modulators" evidence="1">
    <location>
        <begin position="1"/>
        <end position="86"/>
    </location>
</feature>
<feature type="region of interest" description="Domain II" evidence="1">
    <location>
        <begin position="86"/>
        <end position="129"/>
    </location>
</feature>
<feature type="region of interest" description="Domain III, AAA+ region" evidence="1">
    <location>
        <begin position="130"/>
        <end position="346"/>
    </location>
</feature>
<feature type="region of interest" description="Domain IV, binds dsDNA" evidence="1">
    <location>
        <begin position="347"/>
        <end position="466"/>
    </location>
</feature>
<feature type="binding site" evidence="1">
    <location>
        <position position="174"/>
    </location>
    <ligand>
        <name>ATP</name>
        <dbReference type="ChEBI" id="CHEBI:30616"/>
    </ligand>
</feature>
<feature type="binding site" evidence="1">
    <location>
        <position position="176"/>
    </location>
    <ligand>
        <name>ATP</name>
        <dbReference type="ChEBI" id="CHEBI:30616"/>
    </ligand>
</feature>
<feature type="binding site" evidence="1">
    <location>
        <position position="177"/>
    </location>
    <ligand>
        <name>ATP</name>
        <dbReference type="ChEBI" id="CHEBI:30616"/>
    </ligand>
</feature>
<feature type="binding site" evidence="1">
    <location>
        <position position="178"/>
    </location>
    <ligand>
        <name>ATP</name>
        <dbReference type="ChEBI" id="CHEBI:30616"/>
    </ligand>
</feature>
<dbReference type="EMBL" id="CP001113">
    <property type="protein sequence ID" value="ACF61138.1"/>
    <property type="molecule type" value="Genomic_DNA"/>
</dbReference>
<dbReference type="RefSeq" id="WP_000059093.1">
    <property type="nucleotide sequence ID" value="NZ_CCMR01000001.1"/>
</dbReference>
<dbReference type="SMR" id="B4SYA8"/>
<dbReference type="KEGG" id="see:SNSL254_A4123"/>
<dbReference type="HOGENOM" id="CLU_026910_0_1_6"/>
<dbReference type="Proteomes" id="UP000008824">
    <property type="component" value="Chromosome"/>
</dbReference>
<dbReference type="GO" id="GO:0005737">
    <property type="term" value="C:cytoplasm"/>
    <property type="evidence" value="ECO:0007669"/>
    <property type="project" value="UniProtKB-SubCell"/>
</dbReference>
<dbReference type="GO" id="GO:0005886">
    <property type="term" value="C:plasma membrane"/>
    <property type="evidence" value="ECO:0007669"/>
    <property type="project" value="TreeGrafter"/>
</dbReference>
<dbReference type="GO" id="GO:0005524">
    <property type="term" value="F:ATP binding"/>
    <property type="evidence" value="ECO:0007669"/>
    <property type="project" value="UniProtKB-UniRule"/>
</dbReference>
<dbReference type="GO" id="GO:0016887">
    <property type="term" value="F:ATP hydrolysis activity"/>
    <property type="evidence" value="ECO:0007669"/>
    <property type="project" value="InterPro"/>
</dbReference>
<dbReference type="GO" id="GO:0003688">
    <property type="term" value="F:DNA replication origin binding"/>
    <property type="evidence" value="ECO:0007669"/>
    <property type="project" value="UniProtKB-UniRule"/>
</dbReference>
<dbReference type="GO" id="GO:0008289">
    <property type="term" value="F:lipid binding"/>
    <property type="evidence" value="ECO:0007669"/>
    <property type="project" value="UniProtKB-KW"/>
</dbReference>
<dbReference type="GO" id="GO:0006270">
    <property type="term" value="P:DNA replication initiation"/>
    <property type="evidence" value="ECO:0007669"/>
    <property type="project" value="UniProtKB-UniRule"/>
</dbReference>
<dbReference type="GO" id="GO:0006275">
    <property type="term" value="P:regulation of DNA replication"/>
    <property type="evidence" value="ECO:0007669"/>
    <property type="project" value="UniProtKB-UniRule"/>
</dbReference>
<dbReference type="CDD" id="cd00009">
    <property type="entry name" value="AAA"/>
    <property type="match status" value="1"/>
</dbReference>
<dbReference type="CDD" id="cd06571">
    <property type="entry name" value="Bac_DnaA_C"/>
    <property type="match status" value="1"/>
</dbReference>
<dbReference type="FunFam" id="1.10.1750.10:FF:000001">
    <property type="entry name" value="Chromosomal replication initiator protein DnaA"/>
    <property type="match status" value="1"/>
</dbReference>
<dbReference type="FunFam" id="1.10.8.60:FF:000003">
    <property type="entry name" value="Chromosomal replication initiator protein DnaA"/>
    <property type="match status" value="1"/>
</dbReference>
<dbReference type="FunFam" id="3.30.300.180:FF:000001">
    <property type="entry name" value="Chromosomal replication initiator protein DnaA"/>
    <property type="match status" value="1"/>
</dbReference>
<dbReference type="FunFam" id="3.40.50.300:FF:000103">
    <property type="entry name" value="Chromosomal replication initiator protein DnaA"/>
    <property type="match status" value="1"/>
</dbReference>
<dbReference type="Gene3D" id="1.10.1750.10">
    <property type="match status" value="1"/>
</dbReference>
<dbReference type="Gene3D" id="1.10.8.60">
    <property type="match status" value="1"/>
</dbReference>
<dbReference type="Gene3D" id="3.30.300.180">
    <property type="match status" value="1"/>
</dbReference>
<dbReference type="Gene3D" id="3.40.50.300">
    <property type="entry name" value="P-loop containing nucleotide triphosphate hydrolases"/>
    <property type="match status" value="1"/>
</dbReference>
<dbReference type="HAMAP" id="MF_00377">
    <property type="entry name" value="DnaA_bact"/>
    <property type="match status" value="1"/>
</dbReference>
<dbReference type="InterPro" id="IPR003593">
    <property type="entry name" value="AAA+_ATPase"/>
</dbReference>
<dbReference type="InterPro" id="IPR001957">
    <property type="entry name" value="Chromosome_initiator_DnaA"/>
</dbReference>
<dbReference type="InterPro" id="IPR020591">
    <property type="entry name" value="Chromosome_initiator_DnaA-like"/>
</dbReference>
<dbReference type="InterPro" id="IPR018312">
    <property type="entry name" value="Chromosome_initiator_DnaA_CS"/>
</dbReference>
<dbReference type="InterPro" id="IPR013159">
    <property type="entry name" value="DnaA_C"/>
</dbReference>
<dbReference type="InterPro" id="IPR013317">
    <property type="entry name" value="DnaA_dom"/>
</dbReference>
<dbReference type="InterPro" id="IPR024633">
    <property type="entry name" value="DnaA_N_dom"/>
</dbReference>
<dbReference type="InterPro" id="IPR038454">
    <property type="entry name" value="DnaA_N_sf"/>
</dbReference>
<dbReference type="InterPro" id="IPR027417">
    <property type="entry name" value="P-loop_NTPase"/>
</dbReference>
<dbReference type="InterPro" id="IPR010921">
    <property type="entry name" value="Trp_repressor/repl_initiator"/>
</dbReference>
<dbReference type="NCBIfam" id="TIGR00362">
    <property type="entry name" value="DnaA"/>
    <property type="match status" value="1"/>
</dbReference>
<dbReference type="PANTHER" id="PTHR30050">
    <property type="entry name" value="CHROMOSOMAL REPLICATION INITIATOR PROTEIN DNAA"/>
    <property type="match status" value="1"/>
</dbReference>
<dbReference type="PANTHER" id="PTHR30050:SF2">
    <property type="entry name" value="CHROMOSOMAL REPLICATION INITIATOR PROTEIN DNAA"/>
    <property type="match status" value="1"/>
</dbReference>
<dbReference type="Pfam" id="PF00308">
    <property type="entry name" value="Bac_DnaA"/>
    <property type="match status" value="1"/>
</dbReference>
<dbReference type="Pfam" id="PF08299">
    <property type="entry name" value="Bac_DnaA_C"/>
    <property type="match status" value="1"/>
</dbReference>
<dbReference type="Pfam" id="PF11638">
    <property type="entry name" value="DnaA_N"/>
    <property type="match status" value="1"/>
</dbReference>
<dbReference type="PRINTS" id="PR00051">
    <property type="entry name" value="DNAA"/>
</dbReference>
<dbReference type="SMART" id="SM00382">
    <property type="entry name" value="AAA"/>
    <property type="match status" value="1"/>
</dbReference>
<dbReference type="SMART" id="SM00760">
    <property type="entry name" value="Bac_DnaA_C"/>
    <property type="match status" value="1"/>
</dbReference>
<dbReference type="SUPFAM" id="SSF52540">
    <property type="entry name" value="P-loop containing nucleoside triphosphate hydrolases"/>
    <property type="match status" value="1"/>
</dbReference>
<dbReference type="SUPFAM" id="SSF48295">
    <property type="entry name" value="TrpR-like"/>
    <property type="match status" value="1"/>
</dbReference>
<dbReference type="PROSITE" id="PS01008">
    <property type="entry name" value="DNAA"/>
    <property type="match status" value="1"/>
</dbReference>
<proteinExistence type="inferred from homology"/>